<proteinExistence type="inferred from homology"/>
<name>COBT_ALKMQ</name>
<accession>A6TKH4</accession>
<feature type="chain" id="PRO_1000058763" description="Nicotinate-nucleotide--dimethylbenzimidazole phosphoribosyltransferase">
    <location>
        <begin position="1"/>
        <end position="349"/>
    </location>
</feature>
<feature type="active site" description="Proton acceptor" evidence="1">
    <location>
        <position position="318"/>
    </location>
</feature>
<reference key="1">
    <citation type="journal article" date="2016" name="Genome Announc.">
        <title>Complete genome sequence of Alkaliphilus metalliredigens strain QYMF, an alkaliphilic and metal-reducing bacterium isolated from borax-contaminated leachate ponds.</title>
        <authorList>
            <person name="Hwang C."/>
            <person name="Copeland A."/>
            <person name="Lucas S."/>
            <person name="Lapidus A."/>
            <person name="Barry K."/>
            <person name="Detter J.C."/>
            <person name="Glavina Del Rio T."/>
            <person name="Hammon N."/>
            <person name="Israni S."/>
            <person name="Dalin E."/>
            <person name="Tice H."/>
            <person name="Pitluck S."/>
            <person name="Chertkov O."/>
            <person name="Brettin T."/>
            <person name="Bruce D."/>
            <person name="Han C."/>
            <person name="Schmutz J."/>
            <person name="Larimer F."/>
            <person name="Land M.L."/>
            <person name="Hauser L."/>
            <person name="Kyrpides N."/>
            <person name="Mikhailova N."/>
            <person name="Ye Q."/>
            <person name="Zhou J."/>
            <person name="Richardson P."/>
            <person name="Fields M.W."/>
        </authorList>
    </citation>
    <scope>NUCLEOTIDE SEQUENCE [LARGE SCALE GENOMIC DNA]</scope>
    <source>
        <strain>QYMF</strain>
    </source>
</reference>
<sequence length="349" mass="36603">MNKLKETIRMIEELDQETMQKARERVDNLIKPPKSLGRLEDLAVQLAGITKTIHPTVANKAIIVMAADHGVYEEGIAGFPQEITVVQTLNFVKGVTGVCALGKVSGTKIIPVDIGVKEDLDPNAGVLIRKIKYGTDNMAKGPAMSREEAIRALEVGIEVANEEIKNGVTLLGTGEMGIGNTTASTAILSVLGNFDPKEITGRGAGLSPEGIQRKAAVIKRAIEVNQPDATDGIDVVAKVGGLEIAGMAGVMLAAAANRIPVVVDGYIATAAALIAVSLEPKTKQYLIPSHASAEIGSIKATELLGIKPMIHMDLCLGEGSGAALVFPIVEAACHMINCMPTFEEAGITI</sequence>
<protein>
    <recommendedName>
        <fullName evidence="1">Nicotinate-nucleotide--dimethylbenzimidazole phosphoribosyltransferase</fullName>
        <shortName evidence="1">NN:DBI PRT</shortName>
        <ecNumber evidence="1">2.4.2.21</ecNumber>
    </recommendedName>
    <alternativeName>
        <fullName evidence="1">N(1)-alpha-phosphoribosyltransferase</fullName>
    </alternativeName>
</protein>
<organism>
    <name type="scientific">Alkaliphilus metalliredigens (strain QYMF)</name>
    <dbReference type="NCBI Taxonomy" id="293826"/>
    <lineage>
        <taxon>Bacteria</taxon>
        <taxon>Bacillati</taxon>
        <taxon>Bacillota</taxon>
        <taxon>Clostridia</taxon>
        <taxon>Peptostreptococcales</taxon>
        <taxon>Natronincolaceae</taxon>
        <taxon>Alkaliphilus</taxon>
    </lineage>
</organism>
<keyword id="KW-0169">Cobalamin biosynthesis</keyword>
<keyword id="KW-0328">Glycosyltransferase</keyword>
<keyword id="KW-1185">Reference proteome</keyword>
<keyword id="KW-0808">Transferase</keyword>
<evidence type="ECO:0000255" key="1">
    <source>
        <dbReference type="HAMAP-Rule" id="MF_00230"/>
    </source>
</evidence>
<comment type="function">
    <text evidence="1">Catalyzes the synthesis of alpha-ribazole-5'-phosphate from nicotinate mononucleotide (NAMN) and 5,6-dimethylbenzimidazole (DMB).</text>
</comment>
<comment type="catalytic activity">
    <reaction evidence="1">
        <text>5,6-dimethylbenzimidazole + nicotinate beta-D-ribonucleotide = alpha-ribazole 5'-phosphate + nicotinate + H(+)</text>
        <dbReference type="Rhea" id="RHEA:11196"/>
        <dbReference type="ChEBI" id="CHEBI:15378"/>
        <dbReference type="ChEBI" id="CHEBI:15890"/>
        <dbReference type="ChEBI" id="CHEBI:32544"/>
        <dbReference type="ChEBI" id="CHEBI:57502"/>
        <dbReference type="ChEBI" id="CHEBI:57918"/>
        <dbReference type="EC" id="2.4.2.21"/>
    </reaction>
</comment>
<comment type="pathway">
    <text evidence="1">Nucleoside biosynthesis; alpha-ribazole biosynthesis; alpha-ribazole from 5,6-dimethylbenzimidazole: step 1/2.</text>
</comment>
<comment type="similarity">
    <text evidence="1">Belongs to the CobT family.</text>
</comment>
<dbReference type="EC" id="2.4.2.21" evidence="1"/>
<dbReference type="EMBL" id="CP000724">
    <property type="protein sequence ID" value="ABR46692.1"/>
    <property type="molecule type" value="Genomic_DNA"/>
</dbReference>
<dbReference type="RefSeq" id="WP_011971600.1">
    <property type="nucleotide sequence ID" value="NC_009633.1"/>
</dbReference>
<dbReference type="SMR" id="A6TKH4"/>
<dbReference type="STRING" id="293826.Amet_0464"/>
<dbReference type="KEGG" id="amt:Amet_0464"/>
<dbReference type="eggNOG" id="COG2038">
    <property type="taxonomic scope" value="Bacteria"/>
</dbReference>
<dbReference type="HOGENOM" id="CLU_002982_0_0_9"/>
<dbReference type="OrthoDB" id="9781491at2"/>
<dbReference type="UniPathway" id="UPA00061">
    <property type="reaction ID" value="UER00516"/>
</dbReference>
<dbReference type="Proteomes" id="UP000001572">
    <property type="component" value="Chromosome"/>
</dbReference>
<dbReference type="GO" id="GO:0008939">
    <property type="term" value="F:nicotinate-nucleotide-dimethylbenzimidazole phosphoribosyltransferase activity"/>
    <property type="evidence" value="ECO:0007669"/>
    <property type="project" value="UniProtKB-UniRule"/>
</dbReference>
<dbReference type="GO" id="GO:0009236">
    <property type="term" value="P:cobalamin biosynthetic process"/>
    <property type="evidence" value="ECO:0007669"/>
    <property type="project" value="UniProtKB-KW"/>
</dbReference>
<dbReference type="CDD" id="cd02439">
    <property type="entry name" value="DMB-PRT_CobT"/>
    <property type="match status" value="1"/>
</dbReference>
<dbReference type="FunFam" id="3.40.50.10210:FF:000001">
    <property type="entry name" value="Nicotinate-nucleotide--dimethylbenzimidazole phosphoribosyltransferase"/>
    <property type="match status" value="1"/>
</dbReference>
<dbReference type="Gene3D" id="1.10.1610.10">
    <property type="match status" value="1"/>
</dbReference>
<dbReference type="Gene3D" id="3.40.50.10210">
    <property type="match status" value="1"/>
</dbReference>
<dbReference type="HAMAP" id="MF_00230">
    <property type="entry name" value="CobT"/>
    <property type="match status" value="1"/>
</dbReference>
<dbReference type="InterPro" id="IPR003200">
    <property type="entry name" value="Nict_dMeBzImd_PRibTrfase"/>
</dbReference>
<dbReference type="InterPro" id="IPR017846">
    <property type="entry name" value="Nict_dMeBzImd_PRibTrfase_bact"/>
</dbReference>
<dbReference type="InterPro" id="IPR023195">
    <property type="entry name" value="Nict_dMeBzImd_PRibTrfase_N"/>
</dbReference>
<dbReference type="InterPro" id="IPR036087">
    <property type="entry name" value="Nict_dMeBzImd_PRibTrfase_sf"/>
</dbReference>
<dbReference type="NCBIfam" id="TIGR03160">
    <property type="entry name" value="cobT_DBIPRT"/>
    <property type="match status" value="1"/>
</dbReference>
<dbReference type="NCBIfam" id="NF000996">
    <property type="entry name" value="PRK00105.1"/>
    <property type="match status" value="1"/>
</dbReference>
<dbReference type="PANTHER" id="PTHR43463">
    <property type="entry name" value="NICOTINATE-NUCLEOTIDE--DIMETHYLBENZIMIDAZOLE PHOSPHORIBOSYLTRANSFERASE"/>
    <property type="match status" value="1"/>
</dbReference>
<dbReference type="PANTHER" id="PTHR43463:SF1">
    <property type="entry name" value="NICOTINATE-NUCLEOTIDE--DIMETHYLBENZIMIDAZOLE PHOSPHORIBOSYLTRANSFERASE"/>
    <property type="match status" value="1"/>
</dbReference>
<dbReference type="Pfam" id="PF02277">
    <property type="entry name" value="DBI_PRT"/>
    <property type="match status" value="1"/>
</dbReference>
<dbReference type="SUPFAM" id="SSF52733">
    <property type="entry name" value="Nicotinate mononucleotide:5,6-dimethylbenzimidazole phosphoribosyltransferase (CobT)"/>
    <property type="match status" value="1"/>
</dbReference>
<gene>
    <name evidence="1" type="primary">cobT</name>
    <name type="ordered locus">Amet_0464</name>
</gene>